<keyword id="KW-0028">Amino-acid biosynthesis</keyword>
<keyword id="KW-0100">Branched-chain amino acid biosynthesis</keyword>
<keyword id="KW-0432">Leucine biosynthesis</keyword>
<keyword id="KW-0456">Lyase</keyword>
<accession>B0TQM3</accession>
<comment type="function">
    <text evidence="1">Catalyzes the isomerization between 2-isopropylmalate and 3-isopropylmalate, via the formation of 2-isopropylmaleate.</text>
</comment>
<comment type="catalytic activity">
    <reaction evidence="1">
        <text>(2R,3S)-3-isopropylmalate = (2S)-2-isopropylmalate</text>
        <dbReference type="Rhea" id="RHEA:32287"/>
        <dbReference type="ChEBI" id="CHEBI:1178"/>
        <dbReference type="ChEBI" id="CHEBI:35121"/>
        <dbReference type="EC" id="4.2.1.33"/>
    </reaction>
</comment>
<comment type="pathway">
    <text evidence="1">Amino-acid biosynthesis; L-leucine biosynthesis; L-leucine from 3-methyl-2-oxobutanoate: step 2/4.</text>
</comment>
<comment type="subunit">
    <text evidence="1">Heterodimer of LeuC and LeuD.</text>
</comment>
<comment type="similarity">
    <text evidence="1">Belongs to the LeuD family. LeuD type 1 subfamily.</text>
</comment>
<reference key="1">
    <citation type="submission" date="2008-01" db="EMBL/GenBank/DDBJ databases">
        <title>Complete sequence of Shewanella halifaxensis HAW-EB4.</title>
        <authorList>
            <consortium name="US DOE Joint Genome Institute"/>
            <person name="Copeland A."/>
            <person name="Lucas S."/>
            <person name="Lapidus A."/>
            <person name="Glavina del Rio T."/>
            <person name="Dalin E."/>
            <person name="Tice H."/>
            <person name="Bruce D."/>
            <person name="Goodwin L."/>
            <person name="Pitluck S."/>
            <person name="Sims D."/>
            <person name="Brettin T."/>
            <person name="Detter J.C."/>
            <person name="Han C."/>
            <person name="Kuske C.R."/>
            <person name="Schmutz J."/>
            <person name="Larimer F."/>
            <person name="Land M."/>
            <person name="Hauser L."/>
            <person name="Kyrpides N."/>
            <person name="Kim E."/>
            <person name="Zhao J.-S."/>
            <person name="Richardson P."/>
        </authorList>
    </citation>
    <scope>NUCLEOTIDE SEQUENCE [LARGE SCALE GENOMIC DNA]</scope>
    <source>
        <strain>HAW-EB4</strain>
    </source>
</reference>
<gene>
    <name evidence="1" type="primary">leuD</name>
    <name type="ordered locus">Shal_0441</name>
</gene>
<sequence length="201" mass="22037">MQPFISHTGLAVILDSANVDTDQIIPKQFLSKVTRDGFGVHLFHDWRYLDEAGDKPNPDFNLNQPRYKGASILVSQENFGCGSSREHAPWALADFGFKVIIAPSFADIFYGNSINNGLLPVRLTDAEVKQLMAEVEAKEGAEIDVDLQALTVTSPSGALFHFEIAQSARHNLLNGLDAIGLTLSHVDTIANYEANIPSWRG</sequence>
<proteinExistence type="inferred from homology"/>
<protein>
    <recommendedName>
        <fullName evidence="1">3-isopropylmalate dehydratase small subunit</fullName>
        <ecNumber evidence="1">4.2.1.33</ecNumber>
    </recommendedName>
    <alternativeName>
        <fullName evidence="1">Alpha-IPM isomerase</fullName>
        <shortName evidence="1">IPMI</shortName>
    </alternativeName>
    <alternativeName>
        <fullName evidence="1">Isopropylmalate isomerase</fullName>
    </alternativeName>
</protein>
<dbReference type="EC" id="4.2.1.33" evidence="1"/>
<dbReference type="EMBL" id="CP000931">
    <property type="protein sequence ID" value="ABZ75016.1"/>
    <property type="molecule type" value="Genomic_DNA"/>
</dbReference>
<dbReference type="RefSeq" id="WP_012275570.1">
    <property type="nucleotide sequence ID" value="NC_010334.1"/>
</dbReference>
<dbReference type="SMR" id="B0TQM3"/>
<dbReference type="STRING" id="458817.Shal_0441"/>
<dbReference type="KEGG" id="shl:Shal_0441"/>
<dbReference type="eggNOG" id="COG0066">
    <property type="taxonomic scope" value="Bacteria"/>
</dbReference>
<dbReference type="HOGENOM" id="CLU_081378_0_3_6"/>
<dbReference type="OrthoDB" id="9777465at2"/>
<dbReference type="UniPathway" id="UPA00048">
    <property type="reaction ID" value="UER00071"/>
</dbReference>
<dbReference type="Proteomes" id="UP000001317">
    <property type="component" value="Chromosome"/>
</dbReference>
<dbReference type="GO" id="GO:0009316">
    <property type="term" value="C:3-isopropylmalate dehydratase complex"/>
    <property type="evidence" value="ECO:0007669"/>
    <property type="project" value="InterPro"/>
</dbReference>
<dbReference type="GO" id="GO:0003861">
    <property type="term" value="F:3-isopropylmalate dehydratase activity"/>
    <property type="evidence" value="ECO:0007669"/>
    <property type="project" value="UniProtKB-UniRule"/>
</dbReference>
<dbReference type="GO" id="GO:0009098">
    <property type="term" value="P:L-leucine biosynthetic process"/>
    <property type="evidence" value="ECO:0007669"/>
    <property type="project" value="UniProtKB-UniRule"/>
</dbReference>
<dbReference type="CDD" id="cd01577">
    <property type="entry name" value="IPMI_Swivel"/>
    <property type="match status" value="1"/>
</dbReference>
<dbReference type="FunFam" id="3.20.19.10:FF:000003">
    <property type="entry name" value="3-isopropylmalate dehydratase small subunit"/>
    <property type="match status" value="1"/>
</dbReference>
<dbReference type="Gene3D" id="3.20.19.10">
    <property type="entry name" value="Aconitase, domain 4"/>
    <property type="match status" value="1"/>
</dbReference>
<dbReference type="HAMAP" id="MF_01031">
    <property type="entry name" value="LeuD_type1"/>
    <property type="match status" value="1"/>
</dbReference>
<dbReference type="InterPro" id="IPR004431">
    <property type="entry name" value="3-IsopropMal_deHydase_ssu"/>
</dbReference>
<dbReference type="InterPro" id="IPR015928">
    <property type="entry name" value="Aconitase/3IPM_dehydase_swvl"/>
</dbReference>
<dbReference type="InterPro" id="IPR000573">
    <property type="entry name" value="AconitaseA/IPMdHydase_ssu_swvl"/>
</dbReference>
<dbReference type="InterPro" id="IPR033940">
    <property type="entry name" value="IPMI_Swivel"/>
</dbReference>
<dbReference type="InterPro" id="IPR050075">
    <property type="entry name" value="LeuD"/>
</dbReference>
<dbReference type="NCBIfam" id="TIGR00171">
    <property type="entry name" value="leuD"/>
    <property type="match status" value="1"/>
</dbReference>
<dbReference type="NCBIfam" id="NF002458">
    <property type="entry name" value="PRK01641.1"/>
    <property type="match status" value="1"/>
</dbReference>
<dbReference type="PANTHER" id="PTHR43345:SF5">
    <property type="entry name" value="3-ISOPROPYLMALATE DEHYDRATASE SMALL SUBUNIT"/>
    <property type="match status" value="1"/>
</dbReference>
<dbReference type="PANTHER" id="PTHR43345">
    <property type="entry name" value="3-ISOPROPYLMALATE DEHYDRATASE SMALL SUBUNIT 2-RELATED-RELATED"/>
    <property type="match status" value="1"/>
</dbReference>
<dbReference type="Pfam" id="PF00694">
    <property type="entry name" value="Aconitase_C"/>
    <property type="match status" value="1"/>
</dbReference>
<dbReference type="SUPFAM" id="SSF52016">
    <property type="entry name" value="LeuD/IlvD-like"/>
    <property type="match status" value="1"/>
</dbReference>
<name>LEUD_SHEHH</name>
<feature type="chain" id="PRO_1000084266" description="3-isopropylmalate dehydratase small subunit">
    <location>
        <begin position="1"/>
        <end position="201"/>
    </location>
</feature>
<evidence type="ECO:0000255" key="1">
    <source>
        <dbReference type="HAMAP-Rule" id="MF_01031"/>
    </source>
</evidence>
<organism>
    <name type="scientific">Shewanella halifaxensis (strain HAW-EB4)</name>
    <dbReference type="NCBI Taxonomy" id="458817"/>
    <lineage>
        <taxon>Bacteria</taxon>
        <taxon>Pseudomonadati</taxon>
        <taxon>Pseudomonadota</taxon>
        <taxon>Gammaproteobacteria</taxon>
        <taxon>Alteromonadales</taxon>
        <taxon>Shewanellaceae</taxon>
        <taxon>Shewanella</taxon>
    </lineage>
</organism>